<sequence length="373" mass="38915">MVRNIVSRLCSQLFALPSSSLQERDPCSVTEYSGLATAVSSCKNIVLNGFQVPTGKQLDLSSLQNDSTVTFKGTTTFATTADNDFNPIVISGSNITITGASGHVIDGNGQAYWDGKGSNSNSNQKPDHFIVVQKTTGNSKITNLNIQNWPVHCFDITGSSQLTISGLILDNRAGDKPNAKSGSLPAAHNTDGFDISSSDHVTLDNNHVYNQDDCVAVTSGTNIVVSNMYCSGGHGLSIGSVGGKSDNVVDGVQFLSSQVVNSQNGCRIKSNSGATGTINNVTYQNIALTNISTYGVDVQQDYLNGGPTGKPTNGVKISNIKFIKVTGTVASSAQDWFILCGDGSCSGFTFSGNAITGGGKTSSCNYPTNTCPS</sequence>
<evidence type="ECO:0000255" key="1"/>
<evidence type="ECO:0000255" key="2">
    <source>
        <dbReference type="PROSITE-ProRule" id="PRU10052"/>
    </source>
</evidence>
<evidence type="ECO:0000269" key="3">
    <source>
    </source>
</evidence>
<evidence type="ECO:0000305" key="4"/>
<evidence type="ECO:0007829" key="5">
    <source>
        <dbReference type="PDB" id="1HG8"/>
    </source>
</evidence>
<gene>
    <name type="primary">PGA</name>
</gene>
<keyword id="KW-0002">3D-structure</keyword>
<keyword id="KW-0961">Cell wall biogenesis/degradation</keyword>
<keyword id="KW-1015">Disulfide bond</keyword>
<keyword id="KW-0325">Glycoprotein</keyword>
<keyword id="KW-0326">Glycosidase</keyword>
<keyword id="KW-0378">Hydrolase</keyword>
<keyword id="KW-0677">Repeat</keyword>
<keyword id="KW-0964">Secreted</keyword>
<keyword id="KW-0732">Signal</keyword>
<keyword id="KW-0865">Zymogen</keyword>
<reference key="1">
    <citation type="journal article" date="1993" name="Mycol. Res.">
        <title>Cloning and characterization of a gene encoding the endopolygalacturonase of Fusarium moniliforme.</title>
        <authorList>
            <person name="Caprari C."/>
            <person name="Richter A."/>
            <person name="Bergmann C."/>
            <person name="Lo Cicero S."/>
            <person name="Salvi G."/>
            <person name="Cervone F."/>
            <person name="de Lorenzo G."/>
        </authorList>
        <dbReference type="AGRICOLA" id="IND93032473"/>
    </citation>
    <scope>NUCLEOTIDE SEQUENCE [GENOMIC DNA]</scope>
</reference>
<reference key="2">
    <citation type="journal article" date="2001" name="Proc. Natl. Acad. Sci. U.S.A.">
        <title>Structural requirements of endopolygalacturonase for the interaction with PGIP (polygalacturonase-inhibiting protein).</title>
        <authorList>
            <person name="Federici L."/>
            <person name="Caprari C."/>
            <person name="Mattei B."/>
            <person name="Savino C."/>
            <person name="Di Matteo A."/>
            <person name="De Lorenzo G."/>
            <person name="Cervone F."/>
            <person name="Tsernoglou D."/>
        </authorList>
    </citation>
    <scope>X-RAY CRYSTALLOGRAPHY (1.73 ANGSTROMS) OF 25-373</scope>
    <scope>MUTAGENESIS OF HIS-188; ASP-191; 212-ASP-ASP-213; ARG-267 AND LYS-269</scope>
</reference>
<comment type="function">
    <text>Involved in maceration and soft-rotting of plant tissue. Hydrolyzes the 1,4-alpha glycosidic bonds of de-esterified pectate in the smooth region of the plant cell wall.</text>
</comment>
<comment type="catalytic activity">
    <reaction>
        <text>(1,4-alpha-D-galacturonosyl)n+m + H2O = (1,4-alpha-D-galacturonosyl)n + (1,4-alpha-D-galacturonosyl)m.</text>
        <dbReference type="EC" id="3.2.1.15"/>
    </reaction>
</comment>
<comment type="subcellular location">
    <subcellularLocation>
        <location evidence="4">Secreted</location>
    </subcellularLocation>
</comment>
<comment type="similarity">
    <text evidence="4">Belongs to the glycosyl hydrolase 28 family.</text>
</comment>
<organism>
    <name type="scientific">Fusarium fujikuroi</name>
    <name type="common">Bakanae and foot rot disease fungus</name>
    <name type="synonym">Gibberella fujikuroi</name>
    <dbReference type="NCBI Taxonomy" id="5127"/>
    <lineage>
        <taxon>Eukaryota</taxon>
        <taxon>Fungi</taxon>
        <taxon>Dikarya</taxon>
        <taxon>Ascomycota</taxon>
        <taxon>Pezizomycotina</taxon>
        <taxon>Sordariomycetes</taxon>
        <taxon>Hypocreomycetidae</taxon>
        <taxon>Hypocreales</taxon>
        <taxon>Nectriaceae</taxon>
        <taxon>Fusarium</taxon>
        <taxon>Fusarium fujikuroi species complex</taxon>
    </lineage>
</organism>
<dbReference type="EC" id="3.2.1.15"/>
<dbReference type="EMBL" id="L02239">
    <property type="protein sequence ID" value="AAA74586.1"/>
    <property type="molecule type" value="Genomic_DNA"/>
</dbReference>
<dbReference type="PDB" id="1HG8">
    <property type="method" value="X-ray"/>
    <property type="resolution" value="1.73 A"/>
    <property type="chains" value="A=25-373"/>
</dbReference>
<dbReference type="PDBsum" id="1HG8"/>
<dbReference type="SMR" id="Q07181"/>
<dbReference type="CAZy" id="GH28">
    <property type="family name" value="Glycoside Hydrolase Family 28"/>
</dbReference>
<dbReference type="GlyCosmos" id="Q07181">
    <property type="glycosylation" value="4 sites, No reported glycans"/>
</dbReference>
<dbReference type="eggNOG" id="ENOG502QW1P">
    <property type="taxonomic scope" value="Eukaryota"/>
</dbReference>
<dbReference type="BRENDA" id="3.2.1.15">
    <property type="organism ID" value="2425"/>
</dbReference>
<dbReference type="SABIO-RK" id="Q07181"/>
<dbReference type="EvolutionaryTrace" id="Q07181"/>
<dbReference type="GO" id="GO:0005576">
    <property type="term" value="C:extracellular region"/>
    <property type="evidence" value="ECO:0007669"/>
    <property type="project" value="UniProtKB-SubCell"/>
</dbReference>
<dbReference type="GO" id="GO:0004650">
    <property type="term" value="F:polygalacturonase activity"/>
    <property type="evidence" value="ECO:0007669"/>
    <property type="project" value="UniProtKB-EC"/>
</dbReference>
<dbReference type="GO" id="GO:0071555">
    <property type="term" value="P:cell wall organization"/>
    <property type="evidence" value="ECO:0007669"/>
    <property type="project" value="UniProtKB-KW"/>
</dbReference>
<dbReference type="GO" id="GO:0045490">
    <property type="term" value="P:pectin catabolic process"/>
    <property type="evidence" value="ECO:0007669"/>
    <property type="project" value="TreeGrafter"/>
</dbReference>
<dbReference type="FunFam" id="2.160.20.10:FF:000002">
    <property type="entry name" value="Endopolygalacturonase D"/>
    <property type="match status" value="1"/>
</dbReference>
<dbReference type="Gene3D" id="2.160.20.10">
    <property type="entry name" value="Single-stranded right-handed beta-helix, Pectin lyase-like"/>
    <property type="match status" value="1"/>
</dbReference>
<dbReference type="InterPro" id="IPR000743">
    <property type="entry name" value="Glyco_hydro_28"/>
</dbReference>
<dbReference type="InterPro" id="IPR050434">
    <property type="entry name" value="Glycosyl_hydrlase_28"/>
</dbReference>
<dbReference type="InterPro" id="IPR006626">
    <property type="entry name" value="PbH1"/>
</dbReference>
<dbReference type="InterPro" id="IPR012334">
    <property type="entry name" value="Pectin_lyas_fold"/>
</dbReference>
<dbReference type="InterPro" id="IPR011050">
    <property type="entry name" value="Pectin_lyase_fold/virulence"/>
</dbReference>
<dbReference type="PANTHER" id="PTHR31884:SF9">
    <property type="entry name" value="ENDOPOLYGALACTURONASE D-RELATED"/>
    <property type="match status" value="1"/>
</dbReference>
<dbReference type="PANTHER" id="PTHR31884">
    <property type="entry name" value="POLYGALACTURONASE"/>
    <property type="match status" value="1"/>
</dbReference>
<dbReference type="Pfam" id="PF00295">
    <property type="entry name" value="Glyco_hydro_28"/>
    <property type="match status" value="1"/>
</dbReference>
<dbReference type="SMART" id="SM00710">
    <property type="entry name" value="PbH1"/>
    <property type="match status" value="8"/>
</dbReference>
<dbReference type="SUPFAM" id="SSF51126">
    <property type="entry name" value="Pectin lyase-like"/>
    <property type="match status" value="1"/>
</dbReference>
<dbReference type="PROSITE" id="PS00502">
    <property type="entry name" value="POLYGALACTURONASE"/>
    <property type="match status" value="1"/>
</dbReference>
<feature type="signal peptide" evidence="1">
    <location>
        <begin position="1"/>
        <end position="24"/>
    </location>
</feature>
<feature type="chain" id="PRO_0000024786" description="Polygalacturonase">
    <location>
        <begin position="25"/>
        <end position="373"/>
    </location>
</feature>
<feature type="repeat" description="PbH1 1">
    <location>
        <begin position="136"/>
        <end position="158"/>
    </location>
</feature>
<feature type="repeat" description="PbH1 2">
    <location>
        <begin position="159"/>
        <end position="197"/>
    </location>
</feature>
<feature type="repeat" description="PbH1 3">
    <location>
        <begin position="198"/>
        <end position="219"/>
    </location>
</feature>
<feature type="repeat" description="PbH1 4">
    <location>
        <begin position="220"/>
        <end position="240"/>
    </location>
</feature>
<feature type="repeat" description="PbH1 5">
    <location>
        <begin position="249"/>
        <end position="270"/>
    </location>
</feature>
<feature type="repeat" description="PbH1 6">
    <location>
        <begin position="278"/>
        <end position="300"/>
    </location>
</feature>
<feature type="repeat" description="PbH1 7">
    <location>
        <begin position="312"/>
        <end position="333"/>
    </location>
</feature>
<feature type="repeat" description="PbH1 8">
    <location>
        <begin position="345"/>
        <end position="369"/>
    </location>
</feature>
<feature type="active site" description="Proton donor" evidence="2">
    <location>
        <position position="212"/>
    </location>
</feature>
<feature type="active site" evidence="2">
    <location>
        <position position="234"/>
    </location>
</feature>
<feature type="glycosylation site" description="N-linked (GlcNAc...) asparagine" evidence="1">
    <location>
        <position position="65"/>
    </location>
</feature>
<feature type="glycosylation site" description="N-linked (GlcNAc...) asparagine" evidence="1">
    <location>
        <position position="94"/>
    </location>
</feature>
<feature type="glycosylation site" description="N-linked (GlcNAc...) asparagine" evidence="1">
    <location>
        <position position="280"/>
    </location>
</feature>
<feature type="glycosylation site" description="N-linked (GlcNAc...) asparagine" evidence="1">
    <location>
        <position position="290"/>
    </location>
</feature>
<feature type="disulfide bond">
    <location>
        <begin position="27"/>
        <end position="42"/>
    </location>
</feature>
<feature type="disulfide bond">
    <location>
        <begin position="214"/>
        <end position="230"/>
    </location>
</feature>
<feature type="disulfide bond">
    <location>
        <begin position="340"/>
        <end position="345"/>
    </location>
</feature>
<feature type="disulfide bond">
    <location>
        <begin position="364"/>
        <end position="371"/>
    </location>
</feature>
<feature type="mutagenesis site" description="Reduces activity by 98.2%. Lowers affinity for substrate 50-fold." evidence="3">
    <original>H</original>
    <variation>P</variation>
    <location>
        <position position="188"/>
    </location>
</feature>
<feature type="mutagenesis site" description="Loss of activity. No effect on Km for substrate." evidence="3">
    <original>D</original>
    <variation>A</variation>
    <location>
        <position position="191"/>
    </location>
</feature>
<feature type="mutagenesis site" description="Loss of activity. No effect on Km for substrate." evidence="3">
    <original>DD</original>
    <variation>EE</variation>
    <location>
        <begin position="212"/>
        <end position="213"/>
    </location>
</feature>
<feature type="mutagenesis site" description="Loss of activity. No effect on Km for substrate." evidence="3">
    <original>DD</original>
    <variation>NN</variation>
    <location>
        <begin position="212"/>
        <end position="213"/>
    </location>
</feature>
<feature type="mutagenesis site" description="Loss of activity. Lowers affinity for substrate over 10-fold." evidence="3">
    <original>R</original>
    <variation>A</variation>
    <location>
        <position position="267"/>
    </location>
</feature>
<feature type="mutagenesis site" description="Reduces activity by 99.87%. Lowers affinity for substrate over 10-fold." evidence="3">
    <original>K</original>
    <variation>E</variation>
    <location>
        <position position="269"/>
    </location>
</feature>
<feature type="strand" evidence="5">
    <location>
        <begin position="28"/>
        <end position="31"/>
    </location>
</feature>
<feature type="helix" evidence="5">
    <location>
        <begin position="32"/>
        <end position="34"/>
    </location>
</feature>
<feature type="helix" evidence="5">
    <location>
        <begin position="35"/>
        <end position="41"/>
    </location>
</feature>
<feature type="strand" evidence="5">
    <location>
        <begin position="43"/>
        <end position="47"/>
    </location>
</feature>
<feature type="strand" evidence="5">
    <location>
        <begin position="58"/>
        <end position="60"/>
    </location>
</feature>
<feature type="strand" evidence="5">
    <location>
        <begin position="68"/>
        <end position="71"/>
    </location>
</feature>
<feature type="strand" evidence="5">
    <location>
        <begin position="73"/>
        <end position="77"/>
    </location>
</feature>
<feature type="strand" evidence="5">
    <location>
        <begin position="87"/>
        <end position="94"/>
    </location>
</feature>
<feature type="strand" evidence="5">
    <location>
        <begin position="96"/>
        <end position="99"/>
    </location>
</feature>
<feature type="strand" evidence="5">
    <location>
        <begin position="104"/>
        <end position="106"/>
    </location>
</feature>
<feature type="helix" evidence="5">
    <location>
        <begin position="109"/>
        <end position="111"/>
    </location>
</feature>
<feature type="strand" evidence="5">
    <location>
        <begin position="127"/>
        <end position="143"/>
    </location>
</feature>
<feature type="strand" evidence="5">
    <location>
        <begin position="145"/>
        <end position="147"/>
    </location>
</feature>
<feature type="strand" evidence="5">
    <location>
        <begin position="150"/>
        <end position="158"/>
    </location>
</feature>
<feature type="strand" evidence="5">
    <location>
        <begin position="160"/>
        <end position="170"/>
    </location>
</feature>
<feature type="helix" evidence="5">
    <location>
        <begin position="172"/>
        <end position="174"/>
    </location>
</feature>
<feature type="turn" evidence="5">
    <location>
        <begin position="179"/>
        <end position="183"/>
    </location>
</feature>
<feature type="strand" evidence="5">
    <location>
        <begin position="192"/>
        <end position="197"/>
    </location>
</feature>
<feature type="strand" evidence="5">
    <location>
        <begin position="199"/>
        <end position="209"/>
    </location>
</feature>
<feature type="strand" evidence="5">
    <location>
        <begin position="214"/>
        <end position="233"/>
    </location>
</feature>
<feature type="strand" evidence="5">
    <location>
        <begin position="236"/>
        <end position="245"/>
    </location>
</feature>
<feature type="strand" evidence="5">
    <location>
        <begin position="248"/>
        <end position="271"/>
    </location>
</feature>
<feature type="strand" evidence="5">
    <location>
        <begin position="276"/>
        <end position="302"/>
    </location>
</feature>
<feature type="strand" evidence="5">
    <location>
        <begin position="304"/>
        <end position="307"/>
    </location>
</feature>
<feature type="strand" evidence="5">
    <location>
        <begin position="313"/>
        <end position="329"/>
    </location>
</feature>
<feature type="strand" evidence="5">
    <location>
        <begin position="333"/>
        <end position="339"/>
    </location>
</feature>
<feature type="strand" evidence="5">
    <location>
        <begin position="345"/>
        <end position="352"/>
    </location>
</feature>
<feature type="strand" evidence="5">
    <location>
        <begin position="354"/>
        <end position="356"/>
    </location>
</feature>
<feature type="strand" evidence="5">
    <location>
        <begin position="366"/>
        <end position="369"/>
    </location>
</feature>
<proteinExistence type="evidence at protein level"/>
<protein>
    <recommendedName>
        <fullName>Polygalacturonase</fullName>
        <shortName>PG</shortName>
        <ecNumber>3.2.1.15</ecNumber>
    </recommendedName>
    <alternativeName>
        <fullName>FmPG</fullName>
    </alternativeName>
    <alternativeName>
        <fullName>Pectinase</fullName>
    </alternativeName>
</protein>
<accession>Q07181</accession>
<name>PGLR_FUSFU</name>